<keyword id="KW-1003">Cell membrane</keyword>
<keyword id="KW-1015">Disulfide bond</keyword>
<keyword id="KW-0967">Endosome</keyword>
<keyword id="KW-0325">Glycoprotein</keyword>
<keyword id="KW-0333">Golgi apparatus</keyword>
<keyword id="KW-0472">Membrane</keyword>
<keyword id="KW-1185">Reference proteome</keyword>
<keyword id="KW-0964">Secreted</keyword>
<keyword id="KW-0735">Signal-anchor</keyword>
<keyword id="KW-0812">Transmembrane</keyword>
<keyword id="KW-1133">Transmembrane helix</keyword>
<feature type="chain" id="PRO_0000154822" description="Integral membrane protein 2B">
    <location>
        <begin position="1"/>
        <end position="266"/>
    </location>
</feature>
<feature type="chain" id="PRO_0000417471" description="BRI2, membrane form" evidence="1">
    <location>
        <begin position="1"/>
        <end position="243"/>
    </location>
</feature>
<feature type="chain" id="PRO_0000417472" description="BRI2 intracellular domain" evidence="1">
    <location>
        <begin position="1"/>
        <end status="unknown"/>
    </location>
</feature>
<feature type="chain" id="PRO_0000417473" description="BRI2C, soluble form" evidence="1">
    <location>
        <begin status="unknown"/>
        <end position="243"/>
    </location>
</feature>
<feature type="peptide" id="PRO_0000417474" description="Bri23 peptide" evidence="1">
    <location>
        <begin position="244"/>
        <end position="266"/>
    </location>
</feature>
<feature type="topological domain" description="Cytoplasmic" evidence="3">
    <location>
        <begin position="1"/>
        <end position="54"/>
    </location>
</feature>
<feature type="transmembrane region" description="Helical; Signal-anchor for type II membrane protein" evidence="3">
    <location>
        <begin position="55"/>
        <end position="75"/>
    </location>
</feature>
<feature type="topological domain" description="Lumenal" evidence="3">
    <location>
        <begin position="76"/>
        <end position="266"/>
    </location>
</feature>
<feature type="domain" description="BRICHOS" evidence="4">
    <location>
        <begin position="137"/>
        <end position="231"/>
    </location>
</feature>
<feature type="region of interest" description="Necessary for interaction with APP and inhibitor effects on APP processing" evidence="1">
    <location>
        <begin position="102"/>
        <end position="134"/>
    </location>
</feature>
<feature type="site" description="Cleavage; by furin" evidence="1">
    <location>
        <begin position="243"/>
        <end position="244"/>
    </location>
</feature>
<feature type="glycosylation site" description="N-linked (GlcNAc...) asparagine" evidence="3">
    <location>
        <position position="170"/>
    </location>
</feature>
<feature type="disulfide bond" description="Interchain" evidence="1">
    <location>
        <position position="89"/>
    </location>
</feature>
<feature type="disulfide bond" evidence="1">
    <location>
        <begin position="164"/>
        <end position="223"/>
    </location>
</feature>
<feature type="disulfide bond" evidence="1">
    <location>
        <begin position="248"/>
        <end position="265"/>
    </location>
</feature>
<gene>
    <name type="primary">Itm2b</name>
</gene>
<sequence length="266" mass="30260">MVKVTFNSALAQKEAKKDEPKSSEEALIVPPDAVAVDCKDPGDVVPVGQRRAWCWCMCFGLAFMLAGVILGGAYLYKYFALQPDDVYYCGLKYIKDDVILNEPSADAPAARYQTIEENIKIFEEDAVEFISVPVPEFADSDPANIVHDFNKKLTAYLDLNLDKCYVIPLNTSIVMPPKNLLELLINIKAGTYLPQSYLIHEHMVITDRIENVDNLGFFIYRLCHDKETYKLQRRETIRGIQKREASNCFTIRHFENKFAVETLICS</sequence>
<proteinExistence type="evidence at protein level"/>
<protein>
    <recommendedName>
        <fullName>Integral membrane protein 2B</fullName>
    </recommendedName>
    <alternativeName>
        <fullName>Immature BRI2</fullName>
        <shortName>imBRI2</shortName>
    </alternativeName>
    <alternativeName>
        <fullName>Protein E25B</fullName>
    </alternativeName>
    <alternativeName>
        <fullName>Transmembrane protein BRI</fullName>
        <shortName>Bri</shortName>
    </alternativeName>
    <component>
        <recommendedName>
            <fullName>BRI2, membrane form</fullName>
        </recommendedName>
        <alternativeName>
            <fullName>Mature BRI2</fullName>
            <shortName>mBRI2</shortName>
        </alternativeName>
    </component>
    <component>
        <recommendedName>
            <fullName>BRI2 intracellular domain</fullName>
            <shortName>BRI2 ICD</shortName>
        </recommendedName>
    </component>
    <component>
        <recommendedName>
            <fullName>BRI2C, soluble form</fullName>
        </recommendedName>
    </component>
    <component>
        <recommendedName>
            <fullName>Bri23 peptide</fullName>
            <shortName>Bri2-23</shortName>
        </recommendedName>
        <alternativeName>
            <fullName>ABri23</fullName>
        </alternativeName>
        <alternativeName>
            <fullName>C-terminal peptide</fullName>
        </alternativeName>
        <alternativeName>
            <fullName>P23 peptide</fullName>
        </alternativeName>
    </component>
</protein>
<evidence type="ECO:0000250" key="1"/>
<evidence type="ECO:0000250" key="2">
    <source>
        <dbReference type="UniProtKB" id="Q9Y287"/>
    </source>
</evidence>
<evidence type="ECO:0000255" key="3"/>
<evidence type="ECO:0000255" key="4">
    <source>
        <dbReference type="PROSITE-ProRule" id="PRU00255"/>
    </source>
</evidence>
<evidence type="ECO:0000269" key="5">
    <source>
    </source>
</evidence>
<evidence type="ECO:0000305" key="6"/>
<accession>O89051</accession>
<accession>Q545S7</accession>
<name>ITM2B_MOUSE</name>
<comment type="function">
    <text evidence="1">Plays a regulatory role in the processing of the amyloid-beta A4 precursor protein (APP) and acts as an inhibitor of the amyloid-beta peptide aggregation and fibrils deposition. Plays a role in the induction of neurite outgrowth. Functions as a protease inhibitor by blocking access of secretases to APP cleavage sites (By similarity).</text>
</comment>
<comment type="function">
    <text evidence="1">Mature BRI2 (mBRI2) functions as a modulator of the amyloid-beta A4 precursor protein (APP) processing leading to a strong reduction in the secretion of secretase-processed amyloid-beta protein 40 and amyloid-beta protein 42.</text>
</comment>
<comment type="function">
    <text evidence="1">Bri23 peptide prevents aggregation of APP amyloid-beta protein 42 into toxic oligomers.</text>
</comment>
<comment type="subunit">
    <text evidence="1 5">Homodimer; disulfide-linked. Interacts with SPPL2A and SPPL2B. Interacts with APP. Mature BRI2 (mBRI2) interacts with the APP amyloid-beta A4 protein; the interaction occurs at the cell surface and in the endocytic compartments and enable alpha- and beta-secretase-induced APP cleavage inhibition. Mature BRI2 (mBRI2) interacts with the APP C99; the interaction occurs in the endocytic compartments and enable gamma-secretase-induced C99 cleavage inhibition. May form heterodimers with Bri23 peptide and APP amyloid-beta protein 40 (By similarity). Interacts with ADAM7 in sperm; the interaction increases following capacitation (PubMed:20945367).</text>
</comment>
<comment type="subcellular location">
    <molecule>Integral membrane protein 2B</molecule>
    <subcellularLocation>
        <location evidence="2">Golgi apparatus membrane</location>
        <topology evidence="2">Single-pass type II membrane protein</topology>
    </subcellularLocation>
    <text evidence="2">Immature BRI2 (imBRI2) is cleaved by furin in the Golgi into mBRI2 and a Bri23 peptide. mBRI2 is transported to the plasma membrane and Bri23 peptide is secreted.</text>
</comment>
<comment type="subcellular location">
    <molecule>BRI2, membrane form</molecule>
    <subcellularLocation>
        <location evidence="2">Cell membrane</location>
        <topology evidence="2">Single-pass type II membrane protein</topology>
    </subcellularLocation>
    <subcellularLocation>
        <location evidence="2">Endosome membrane</location>
        <topology evidence="2">Single-pass type II membrane protein</topology>
    </subcellularLocation>
    <text evidence="2">Mature BRI2 (mBRI2) needs to be transported from the endoplasmic reticulum compartment to the cell membrane in order to be able to inhibit APP processing.</text>
</comment>
<comment type="subcellular location">
    <molecule>Bri23 peptide</molecule>
    <subcellularLocation>
        <location evidence="2">Secreted</location>
    </subcellularLocation>
    <text evidence="2">Detected in the cerebral spinal fluid (CSF).</text>
</comment>
<comment type="subcellular location">
    <molecule>BRI2C, soluble form</molecule>
    <subcellularLocation>
        <location evidence="2">Secreted</location>
    </subcellularLocation>
</comment>
<comment type="tissue specificity">
    <text evidence="5">Expressed in the brain, testis, testicular sperm, epididymis and mature epididymal sperm (at protein level).</text>
</comment>
<comment type="PTM">
    <text evidence="1">The ectodomain C-terminal part of the imBRI2 is processed by furin producing a secreted Bri23 peptide and a mature BRI2, membrane form (mBRI2). The remaining part of the ectodomain of mBRI2 containing the BRICHOS domain is cleaved by ADAM10 and is secreted (BRI2C, soluble form). The membrane-bound N-terminal fragment (BRI2C, membrane form) is further proteolytically processed by SPPL2A and SPPL2B through regulated intramembrane proteolysis producing a secreted C-peptide and a BRI2 intracellular domain (BRI2 ICD) released in the cytosol. Shedding by ADAM10 facilitates intramembrane cleavage but is not absolutely required for BRI2 ICD generation (By similarity).</text>
</comment>
<comment type="PTM">
    <text evidence="1">Glycosylation at Asn-170 is important for cell surface localization, but doesn't affect furin- and ADAM10-induced proteolytic processing.</text>
</comment>
<comment type="similarity">
    <text evidence="6">Belongs to the ITM2 family.</text>
</comment>
<reference key="1">
    <citation type="journal article" date="1998" name="Gene">
        <title>cDNA sequence analysis, chromosomal assignment and expression pattern of the gene coding for integral membrane protein 2B.</title>
        <authorList>
            <person name="Pittois K."/>
            <person name="Deleersnijder W."/>
            <person name="Merregaert J."/>
        </authorList>
    </citation>
    <scope>NUCLEOTIDE SEQUENCE [MRNA]</scope>
</reference>
<reference key="2">
    <citation type="journal article" date="2000" name="Biochem. Biophys. Res. Commun.">
        <title>Growth suppression of Escherichia coli by induction of expression of mammalian genes with transmembrane or ATPase domains.</title>
        <authorList>
            <person name="Inoue S."/>
            <person name="Sano H."/>
            <person name="Ohta M."/>
        </authorList>
    </citation>
    <scope>NUCLEOTIDE SEQUENCE [MRNA]</scope>
    <source>
        <tissue>Brain</tissue>
    </source>
</reference>
<reference key="3">
    <citation type="journal article" date="2005" name="Science">
        <title>The transcriptional landscape of the mammalian genome.</title>
        <authorList>
            <person name="Carninci P."/>
            <person name="Kasukawa T."/>
            <person name="Katayama S."/>
            <person name="Gough J."/>
            <person name="Frith M.C."/>
            <person name="Maeda N."/>
            <person name="Oyama R."/>
            <person name="Ravasi T."/>
            <person name="Lenhard B."/>
            <person name="Wells C."/>
            <person name="Kodzius R."/>
            <person name="Shimokawa K."/>
            <person name="Bajic V.B."/>
            <person name="Brenner S.E."/>
            <person name="Batalov S."/>
            <person name="Forrest A.R."/>
            <person name="Zavolan M."/>
            <person name="Davis M.J."/>
            <person name="Wilming L.G."/>
            <person name="Aidinis V."/>
            <person name="Allen J.E."/>
            <person name="Ambesi-Impiombato A."/>
            <person name="Apweiler R."/>
            <person name="Aturaliya R.N."/>
            <person name="Bailey T.L."/>
            <person name="Bansal M."/>
            <person name="Baxter L."/>
            <person name="Beisel K.W."/>
            <person name="Bersano T."/>
            <person name="Bono H."/>
            <person name="Chalk A.M."/>
            <person name="Chiu K.P."/>
            <person name="Choudhary V."/>
            <person name="Christoffels A."/>
            <person name="Clutterbuck D.R."/>
            <person name="Crowe M.L."/>
            <person name="Dalla E."/>
            <person name="Dalrymple B.P."/>
            <person name="de Bono B."/>
            <person name="Della Gatta G."/>
            <person name="di Bernardo D."/>
            <person name="Down T."/>
            <person name="Engstrom P."/>
            <person name="Fagiolini M."/>
            <person name="Faulkner G."/>
            <person name="Fletcher C.F."/>
            <person name="Fukushima T."/>
            <person name="Furuno M."/>
            <person name="Futaki S."/>
            <person name="Gariboldi M."/>
            <person name="Georgii-Hemming P."/>
            <person name="Gingeras T.R."/>
            <person name="Gojobori T."/>
            <person name="Green R.E."/>
            <person name="Gustincich S."/>
            <person name="Harbers M."/>
            <person name="Hayashi Y."/>
            <person name="Hensch T.K."/>
            <person name="Hirokawa N."/>
            <person name="Hill D."/>
            <person name="Huminiecki L."/>
            <person name="Iacono M."/>
            <person name="Ikeo K."/>
            <person name="Iwama A."/>
            <person name="Ishikawa T."/>
            <person name="Jakt M."/>
            <person name="Kanapin A."/>
            <person name="Katoh M."/>
            <person name="Kawasawa Y."/>
            <person name="Kelso J."/>
            <person name="Kitamura H."/>
            <person name="Kitano H."/>
            <person name="Kollias G."/>
            <person name="Krishnan S.P."/>
            <person name="Kruger A."/>
            <person name="Kummerfeld S.K."/>
            <person name="Kurochkin I.V."/>
            <person name="Lareau L.F."/>
            <person name="Lazarevic D."/>
            <person name="Lipovich L."/>
            <person name="Liu J."/>
            <person name="Liuni S."/>
            <person name="McWilliam S."/>
            <person name="Madan Babu M."/>
            <person name="Madera M."/>
            <person name="Marchionni L."/>
            <person name="Matsuda H."/>
            <person name="Matsuzawa S."/>
            <person name="Miki H."/>
            <person name="Mignone F."/>
            <person name="Miyake S."/>
            <person name="Morris K."/>
            <person name="Mottagui-Tabar S."/>
            <person name="Mulder N."/>
            <person name="Nakano N."/>
            <person name="Nakauchi H."/>
            <person name="Ng P."/>
            <person name="Nilsson R."/>
            <person name="Nishiguchi S."/>
            <person name="Nishikawa S."/>
            <person name="Nori F."/>
            <person name="Ohara O."/>
            <person name="Okazaki Y."/>
            <person name="Orlando V."/>
            <person name="Pang K.C."/>
            <person name="Pavan W.J."/>
            <person name="Pavesi G."/>
            <person name="Pesole G."/>
            <person name="Petrovsky N."/>
            <person name="Piazza S."/>
            <person name="Reed J."/>
            <person name="Reid J.F."/>
            <person name="Ring B.Z."/>
            <person name="Ringwald M."/>
            <person name="Rost B."/>
            <person name="Ruan Y."/>
            <person name="Salzberg S.L."/>
            <person name="Sandelin A."/>
            <person name="Schneider C."/>
            <person name="Schoenbach C."/>
            <person name="Sekiguchi K."/>
            <person name="Semple C.A."/>
            <person name="Seno S."/>
            <person name="Sessa L."/>
            <person name="Sheng Y."/>
            <person name="Shibata Y."/>
            <person name="Shimada H."/>
            <person name="Shimada K."/>
            <person name="Silva D."/>
            <person name="Sinclair B."/>
            <person name="Sperling S."/>
            <person name="Stupka E."/>
            <person name="Sugiura K."/>
            <person name="Sultana R."/>
            <person name="Takenaka Y."/>
            <person name="Taki K."/>
            <person name="Tammoja K."/>
            <person name="Tan S.L."/>
            <person name="Tang S."/>
            <person name="Taylor M.S."/>
            <person name="Tegner J."/>
            <person name="Teichmann S.A."/>
            <person name="Ueda H.R."/>
            <person name="van Nimwegen E."/>
            <person name="Verardo R."/>
            <person name="Wei C.L."/>
            <person name="Yagi K."/>
            <person name="Yamanishi H."/>
            <person name="Zabarovsky E."/>
            <person name="Zhu S."/>
            <person name="Zimmer A."/>
            <person name="Hide W."/>
            <person name="Bult C."/>
            <person name="Grimmond S.M."/>
            <person name="Teasdale R.D."/>
            <person name="Liu E.T."/>
            <person name="Brusic V."/>
            <person name="Quackenbush J."/>
            <person name="Wahlestedt C."/>
            <person name="Mattick J.S."/>
            <person name="Hume D.A."/>
            <person name="Kai C."/>
            <person name="Sasaki D."/>
            <person name="Tomaru Y."/>
            <person name="Fukuda S."/>
            <person name="Kanamori-Katayama M."/>
            <person name="Suzuki M."/>
            <person name="Aoki J."/>
            <person name="Arakawa T."/>
            <person name="Iida J."/>
            <person name="Imamura K."/>
            <person name="Itoh M."/>
            <person name="Kato T."/>
            <person name="Kawaji H."/>
            <person name="Kawagashira N."/>
            <person name="Kawashima T."/>
            <person name="Kojima M."/>
            <person name="Kondo S."/>
            <person name="Konno H."/>
            <person name="Nakano K."/>
            <person name="Ninomiya N."/>
            <person name="Nishio T."/>
            <person name="Okada M."/>
            <person name="Plessy C."/>
            <person name="Shibata K."/>
            <person name="Shiraki T."/>
            <person name="Suzuki S."/>
            <person name="Tagami M."/>
            <person name="Waki K."/>
            <person name="Watahiki A."/>
            <person name="Okamura-Oho Y."/>
            <person name="Suzuki H."/>
            <person name="Kawai J."/>
            <person name="Hayashizaki Y."/>
        </authorList>
    </citation>
    <scope>NUCLEOTIDE SEQUENCE [LARGE SCALE MRNA]</scope>
    <source>
        <strain>C57BL/6J</strain>
        <tissue>Cerebellum</tissue>
        <tissue>Head</tissue>
        <tissue>Hippocampus</tissue>
        <tissue>Kidney</tissue>
    </source>
</reference>
<reference key="4">
    <citation type="journal article" date="2004" name="Genome Res.">
        <title>The status, quality, and expansion of the NIH full-length cDNA project: the Mammalian Gene Collection (MGC).</title>
        <authorList>
            <consortium name="The MGC Project Team"/>
        </authorList>
    </citation>
    <scope>NUCLEOTIDE SEQUENCE [LARGE SCALE MRNA]</scope>
    <source>
        <strain>FVB/N</strain>
        <tissue>Mammary gland</tissue>
    </source>
</reference>
<reference key="5">
    <citation type="journal article" date="2010" name="Cell">
        <title>A tissue-specific atlas of mouse protein phosphorylation and expression.</title>
        <authorList>
            <person name="Huttlin E.L."/>
            <person name="Jedrychowski M.P."/>
            <person name="Elias J.E."/>
            <person name="Goswami T."/>
            <person name="Rad R."/>
            <person name="Beausoleil S.A."/>
            <person name="Villen J."/>
            <person name="Haas W."/>
            <person name="Sowa M.E."/>
            <person name="Gygi S.P."/>
        </authorList>
    </citation>
    <scope>IDENTIFICATION BY MASS SPECTROMETRY [LARGE SCALE ANALYSIS]</scope>
    <source>
        <tissue>Brain</tissue>
        <tissue>Heart</tissue>
        <tissue>Kidney</tissue>
        <tissue>Liver</tissue>
        <tissue>Lung</tissue>
        <tissue>Spleen</tissue>
        <tissue>Testis</tissue>
    </source>
</reference>
<reference key="6">
    <citation type="journal article" date="2011" name="J. Cell. Physiol.">
        <title>Identification of heat shock protein 5, calnexin and integral membrane protein 2B as Adam7-interacting membrane proteins in mouse sperm.</title>
        <authorList>
            <person name="Han C."/>
            <person name="Park I."/>
            <person name="Lee B."/>
            <person name="Jin S."/>
            <person name="Choi H."/>
            <person name="Kwon J.T."/>
            <person name="Kwon Y.I."/>
            <person name="Kim D.H."/>
            <person name="Park Z.Y."/>
            <person name="Cho C."/>
        </authorList>
    </citation>
    <scope>INTERACTION WITH ADAM7</scope>
    <scope>TISSUE SPECIFICITY</scope>
</reference>
<dbReference type="EMBL" id="U76253">
    <property type="protein sequence ID" value="AAC63851.1"/>
    <property type="molecule type" value="mRNA"/>
</dbReference>
<dbReference type="EMBL" id="AB030203">
    <property type="protein sequence ID" value="BAA92766.1"/>
    <property type="molecule type" value="mRNA"/>
</dbReference>
<dbReference type="EMBL" id="AK002599">
    <property type="protein sequence ID" value="BAB22220.1"/>
    <property type="molecule type" value="mRNA"/>
</dbReference>
<dbReference type="EMBL" id="AK003587">
    <property type="protein sequence ID" value="BAB22877.1"/>
    <property type="molecule type" value="mRNA"/>
</dbReference>
<dbReference type="EMBL" id="AK005125">
    <property type="protein sequence ID" value="BAB23828.1"/>
    <property type="molecule type" value="mRNA"/>
</dbReference>
<dbReference type="EMBL" id="AK076139">
    <property type="protein sequence ID" value="BAC36212.1"/>
    <property type="molecule type" value="mRNA"/>
</dbReference>
<dbReference type="EMBL" id="AK077482">
    <property type="protein sequence ID" value="BAC36822.1"/>
    <property type="molecule type" value="mRNA"/>
</dbReference>
<dbReference type="EMBL" id="AK150378">
    <property type="protein sequence ID" value="BAE29510.1"/>
    <property type="molecule type" value="mRNA"/>
</dbReference>
<dbReference type="EMBL" id="AK151714">
    <property type="protein sequence ID" value="BAE30633.1"/>
    <property type="molecule type" value="mRNA"/>
</dbReference>
<dbReference type="EMBL" id="AK151889">
    <property type="protein sequence ID" value="BAE30773.1"/>
    <property type="molecule type" value="mRNA"/>
</dbReference>
<dbReference type="EMBL" id="AK152068">
    <property type="protein sequence ID" value="BAE30922.1"/>
    <property type="molecule type" value="mRNA"/>
</dbReference>
<dbReference type="EMBL" id="AK152516">
    <property type="protein sequence ID" value="BAE31278.1"/>
    <property type="molecule type" value="mRNA"/>
</dbReference>
<dbReference type="EMBL" id="AK152650">
    <property type="protein sequence ID" value="BAE31387.1"/>
    <property type="molecule type" value="mRNA"/>
</dbReference>
<dbReference type="EMBL" id="AK152731">
    <property type="protein sequence ID" value="BAE31452.1"/>
    <property type="molecule type" value="mRNA"/>
</dbReference>
<dbReference type="EMBL" id="AK152983">
    <property type="protein sequence ID" value="BAE31632.1"/>
    <property type="molecule type" value="mRNA"/>
</dbReference>
<dbReference type="EMBL" id="AK153103">
    <property type="protein sequence ID" value="BAE31723.1"/>
    <property type="molecule type" value="mRNA"/>
</dbReference>
<dbReference type="EMBL" id="AK159340">
    <property type="protein sequence ID" value="BAE35002.1"/>
    <property type="molecule type" value="mRNA"/>
</dbReference>
<dbReference type="EMBL" id="AK159426">
    <property type="protein sequence ID" value="BAE35073.1"/>
    <property type="molecule type" value="mRNA"/>
</dbReference>
<dbReference type="EMBL" id="AK159619">
    <property type="protein sequence ID" value="BAE35235.1"/>
    <property type="molecule type" value="mRNA"/>
</dbReference>
<dbReference type="EMBL" id="AK159628">
    <property type="protein sequence ID" value="BAE35242.1"/>
    <property type="molecule type" value="mRNA"/>
</dbReference>
<dbReference type="EMBL" id="AK159792">
    <property type="protein sequence ID" value="BAE35374.1"/>
    <property type="molecule type" value="mRNA"/>
</dbReference>
<dbReference type="EMBL" id="AK159962">
    <property type="protein sequence ID" value="BAE35517.1"/>
    <property type="molecule type" value="mRNA"/>
</dbReference>
<dbReference type="EMBL" id="AK160725">
    <property type="protein sequence ID" value="BAE35970.1"/>
    <property type="molecule type" value="mRNA"/>
</dbReference>
<dbReference type="EMBL" id="BC004731">
    <property type="protein sequence ID" value="AAH04731.1"/>
    <property type="molecule type" value="mRNA"/>
</dbReference>
<dbReference type="EMBL" id="BC010320">
    <property type="protein sequence ID" value="AAH10320.1"/>
    <property type="molecule type" value="mRNA"/>
</dbReference>
<dbReference type="EMBL" id="BC021786">
    <property type="protein sequence ID" value="AAH21786.1"/>
    <property type="molecule type" value="mRNA"/>
</dbReference>
<dbReference type="CCDS" id="CCDS27269.1"/>
<dbReference type="RefSeq" id="NP_032436.1">
    <property type="nucleotide sequence ID" value="NM_008410.3"/>
</dbReference>
<dbReference type="SMR" id="O89051"/>
<dbReference type="BioGRID" id="200844">
    <property type="interactions" value="13"/>
</dbReference>
<dbReference type="FunCoup" id="O89051">
    <property type="interactions" value="1556"/>
</dbReference>
<dbReference type="IntAct" id="O89051">
    <property type="interactions" value="3"/>
</dbReference>
<dbReference type="MINT" id="O89051"/>
<dbReference type="STRING" id="10090.ENSMUSP00000022704"/>
<dbReference type="GlyConnect" id="2394">
    <property type="glycosylation" value="2 N-Linked glycans (1 site)"/>
</dbReference>
<dbReference type="GlyCosmos" id="O89051">
    <property type="glycosylation" value="1 site, 2 glycans"/>
</dbReference>
<dbReference type="GlyGen" id="O89051">
    <property type="glycosylation" value="1 site, 3 N-linked glycans (1 site)"/>
</dbReference>
<dbReference type="iPTMnet" id="O89051"/>
<dbReference type="PhosphoSitePlus" id="O89051"/>
<dbReference type="SwissPalm" id="O89051"/>
<dbReference type="CPTAC" id="non-CPTAC-3585"/>
<dbReference type="jPOST" id="O89051"/>
<dbReference type="PaxDb" id="10090-ENSMUSP00000022704"/>
<dbReference type="PeptideAtlas" id="O89051"/>
<dbReference type="ProteomicsDB" id="268907"/>
<dbReference type="Pumba" id="O89051"/>
<dbReference type="Antibodypedia" id="23811">
    <property type="antibodies" value="255 antibodies from 30 providers"/>
</dbReference>
<dbReference type="DNASU" id="16432"/>
<dbReference type="Ensembl" id="ENSMUST00000022704.9">
    <property type="protein sequence ID" value="ENSMUSP00000022704.8"/>
    <property type="gene ID" value="ENSMUSG00000022108.9"/>
</dbReference>
<dbReference type="GeneID" id="16432"/>
<dbReference type="KEGG" id="mmu:16432"/>
<dbReference type="UCSC" id="uc007ups.1">
    <property type="organism name" value="mouse"/>
</dbReference>
<dbReference type="AGR" id="MGI:1309517"/>
<dbReference type="CTD" id="9445"/>
<dbReference type="MGI" id="MGI:1309517">
    <property type="gene designation" value="Itm2b"/>
</dbReference>
<dbReference type="VEuPathDB" id="HostDB:ENSMUSG00000022108"/>
<dbReference type="eggNOG" id="KOG4681">
    <property type="taxonomic scope" value="Eukaryota"/>
</dbReference>
<dbReference type="GeneTree" id="ENSGT00950000183115"/>
<dbReference type="HOGENOM" id="CLU_074596_0_0_1"/>
<dbReference type="InParanoid" id="O89051"/>
<dbReference type="OMA" id="YFAFQQD"/>
<dbReference type="OrthoDB" id="9982095at2759"/>
<dbReference type="PhylomeDB" id="O89051"/>
<dbReference type="TreeFam" id="TF317770"/>
<dbReference type="BioGRID-ORCS" id="16432">
    <property type="hits" value="2 hits in 78 CRISPR screens"/>
</dbReference>
<dbReference type="CD-CODE" id="CE726F99">
    <property type="entry name" value="Postsynaptic density"/>
</dbReference>
<dbReference type="ChiTaRS" id="Itm2b">
    <property type="organism name" value="mouse"/>
</dbReference>
<dbReference type="PRO" id="PR:O89051"/>
<dbReference type="Proteomes" id="UP000000589">
    <property type="component" value="Chromosome 14"/>
</dbReference>
<dbReference type="RNAct" id="O89051">
    <property type="molecule type" value="protein"/>
</dbReference>
<dbReference type="Bgee" id="ENSMUSG00000022108">
    <property type="expression patterns" value="Expressed in stroma of bone marrow and 268 other cell types or tissues"/>
</dbReference>
<dbReference type="ExpressionAtlas" id="O89051">
    <property type="expression patterns" value="baseline and differential"/>
</dbReference>
<dbReference type="GO" id="GO:0010008">
    <property type="term" value="C:endosome membrane"/>
    <property type="evidence" value="ECO:0007669"/>
    <property type="project" value="UniProtKB-SubCell"/>
</dbReference>
<dbReference type="GO" id="GO:0005615">
    <property type="term" value="C:extracellular space"/>
    <property type="evidence" value="ECO:0000250"/>
    <property type="project" value="UniProtKB"/>
</dbReference>
<dbReference type="GO" id="GO:0000139">
    <property type="term" value="C:Golgi membrane"/>
    <property type="evidence" value="ECO:0007669"/>
    <property type="project" value="UniProtKB-SubCell"/>
</dbReference>
<dbReference type="GO" id="GO:0030660">
    <property type="term" value="C:Golgi-associated vesicle membrane"/>
    <property type="evidence" value="ECO:0000250"/>
    <property type="project" value="UniProtKB"/>
</dbReference>
<dbReference type="GO" id="GO:0031090">
    <property type="term" value="C:organelle membrane"/>
    <property type="evidence" value="ECO:0000250"/>
    <property type="project" value="UniProtKB"/>
</dbReference>
<dbReference type="GO" id="GO:0005886">
    <property type="term" value="C:plasma membrane"/>
    <property type="evidence" value="ECO:0000250"/>
    <property type="project" value="UniProtKB"/>
</dbReference>
<dbReference type="GO" id="GO:0001540">
    <property type="term" value="F:amyloid-beta binding"/>
    <property type="evidence" value="ECO:0007669"/>
    <property type="project" value="Ensembl"/>
</dbReference>
<dbReference type="GO" id="GO:0005524">
    <property type="term" value="F:ATP binding"/>
    <property type="evidence" value="ECO:0000314"/>
    <property type="project" value="MGI"/>
</dbReference>
<dbReference type="GO" id="GO:0042985">
    <property type="term" value="P:negative regulation of amyloid precursor protein biosynthetic process"/>
    <property type="evidence" value="ECO:0000250"/>
    <property type="project" value="UniProtKB"/>
</dbReference>
<dbReference type="InterPro" id="IPR007084">
    <property type="entry name" value="BRICHOS_dom"/>
</dbReference>
<dbReference type="InterPro" id="IPR040145">
    <property type="entry name" value="ITM2"/>
</dbReference>
<dbReference type="PANTHER" id="PTHR10962:SF4">
    <property type="entry name" value="INTEGRAL MEMBRANE PROTEIN 2B"/>
    <property type="match status" value="1"/>
</dbReference>
<dbReference type="PANTHER" id="PTHR10962">
    <property type="entry name" value="INTEGRAL TRANSMEMBRANE PROTEIN 2"/>
    <property type="match status" value="1"/>
</dbReference>
<dbReference type="Pfam" id="PF04089">
    <property type="entry name" value="BRICHOS"/>
    <property type="match status" value="1"/>
</dbReference>
<dbReference type="SMART" id="SM01039">
    <property type="entry name" value="BRICHOS"/>
    <property type="match status" value="1"/>
</dbReference>
<dbReference type="PROSITE" id="PS50869">
    <property type="entry name" value="BRICHOS"/>
    <property type="match status" value="1"/>
</dbReference>
<organism>
    <name type="scientific">Mus musculus</name>
    <name type="common">Mouse</name>
    <dbReference type="NCBI Taxonomy" id="10090"/>
    <lineage>
        <taxon>Eukaryota</taxon>
        <taxon>Metazoa</taxon>
        <taxon>Chordata</taxon>
        <taxon>Craniata</taxon>
        <taxon>Vertebrata</taxon>
        <taxon>Euteleostomi</taxon>
        <taxon>Mammalia</taxon>
        <taxon>Eutheria</taxon>
        <taxon>Euarchontoglires</taxon>
        <taxon>Glires</taxon>
        <taxon>Rodentia</taxon>
        <taxon>Myomorpha</taxon>
        <taxon>Muroidea</taxon>
        <taxon>Muridae</taxon>
        <taxon>Murinae</taxon>
        <taxon>Mus</taxon>
        <taxon>Mus</taxon>
    </lineage>
</organism>